<comment type="function">
    <text evidence="1">F(1)F(0) ATP synthase produces ATP from ADP in the presence of a proton or sodium gradient. F-type ATPases consist of two structural domains, F(1) containing the extramembraneous catalytic core and F(0) containing the membrane proton channel, linked together by a central stalk and a peripheral stalk. During catalysis, ATP synthesis in the catalytic domain of F(1) is coupled via a rotary mechanism of the central stalk subunits to proton translocation.</text>
</comment>
<comment type="function">
    <text evidence="1">Key component of the F(0) channel; it plays a direct role in translocation across the membrane. A homomeric c-ring of between 10-14 subunits forms the central stalk rotor element with the F(1) delta and epsilon subunits.</text>
</comment>
<comment type="subunit">
    <text evidence="1">F-type ATPases have 2 components, F(1) - the catalytic core - and F(0) - the membrane proton channel. F(1) has five subunits: alpha(3), beta(3), gamma(1), delta(1), epsilon(1). F(0) has three main subunits: a(1), b(2) and c(10-14). The alpha and beta chains form an alternating ring which encloses part of the gamma chain. F(1) is attached to F(0) by a central stalk formed by the gamma and epsilon chains, while a peripheral stalk is formed by the delta and b chains.</text>
</comment>
<comment type="subcellular location">
    <subcellularLocation>
        <location evidence="1">Cell inner membrane</location>
        <topology evidence="1">Multi-pass membrane protein</topology>
    </subcellularLocation>
</comment>
<comment type="similarity">
    <text evidence="1">Belongs to the ATPase C chain family.</text>
</comment>
<protein>
    <recommendedName>
        <fullName evidence="1">ATP synthase subunit c</fullName>
    </recommendedName>
    <alternativeName>
        <fullName evidence="1">ATP synthase F(0) sector subunit c</fullName>
    </alternativeName>
    <alternativeName>
        <fullName evidence="1">F-type ATPase subunit c</fullName>
        <shortName evidence="1">F-ATPase subunit c</shortName>
    </alternativeName>
    <alternativeName>
        <fullName evidence="1">Lipid-binding protein</fullName>
    </alternativeName>
</protein>
<feature type="chain" id="PRO_1000184392" description="ATP synthase subunit c">
    <location>
        <begin position="1"/>
        <end position="103"/>
    </location>
</feature>
<feature type="transmembrane region" description="Helical" evidence="1">
    <location>
        <begin position="3"/>
        <end position="23"/>
    </location>
</feature>
<feature type="transmembrane region" description="Helical" evidence="1">
    <location>
        <begin position="30"/>
        <end position="50"/>
    </location>
</feature>
<feature type="transmembrane region" description="Helical" evidence="1">
    <location>
        <begin position="74"/>
        <end position="94"/>
    </location>
</feature>
<feature type="site" description="Reversibly protonated during proton transport" evidence="1">
    <location>
        <position position="82"/>
    </location>
</feature>
<dbReference type="EMBL" id="AE017125">
    <property type="protein sequence ID" value="AAP77190.1"/>
    <property type="molecule type" value="Genomic_DNA"/>
</dbReference>
<dbReference type="RefSeq" id="WP_011115435.1">
    <property type="nucleotide sequence ID" value="NC_004917.1"/>
</dbReference>
<dbReference type="SMR" id="Q7VIL1"/>
<dbReference type="STRING" id="235279.HH_0593"/>
<dbReference type="KEGG" id="hhe:HH_0593"/>
<dbReference type="eggNOG" id="COG0636">
    <property type="taxonomic scope" value="Bacteria"/>
</dbReference>
<dbReference type="HOGENOM" id="CLU_148047_0_1_7"/>
<dbReference type="OrthoDB" id="5339943at2"/>
<dbReference type="Proteomes" id="UP000002495">
    <property type="component" value="Chromosome"/>
</dbReference>
<dbReference type="GO" id="GO:0005886">
    <property type="term" value="C:plasma membrane"/>
    <property type="evidence" value="ECO:0007669"/>
    <property type="project" value="UniProtKB-SubCell"/>
</dbReference>
<dbReference type="GO" id="GO:0045259">
    <property type="term" value="C:proton-transporting ATP synthase complex"/>
    <property type="evidence" value="ECO:0007669"/>
    <property type="project" value="UniProtKB-KW"/>
</dbReference>
<dbReference type="GO" id="GO:0033177">
    <property type="term" value="C:proton-transporting two-sector ATPase complex, proton-transporting domain"/>
    <property type="evidence" value="ECO:0007669"/>
    <property type="project" value="InterPro"/>
</dbReference>
<dbReference type="GO" id="GO:0008289">
    <property type="term" value="F:lipid binding"/>
    <property type="evidence" value="ECO:0007669"/>
    <property type="project" value="UniProtKB-KW"/>
</dbReference>
<dbReference type="GO" id="GO:0046933">
    <property type="term" value="F:proton-transporting ATP synthase activity, rotational mechanism"/>
    <property type="evidence" value="ECO:0007669"/>
    <property type="project" value="UniProtKB-UniRule"/>
</dbReference>
<dbReference type="CDD" id="cd18121">
    <property type="entry name" value="ATP-synt_Fo_c"/>
    <property type="match status" value="1"/>
</dbReference>
<dbReference type="Gene3D" id="1.20.20.10">
    <property type="entry name" value="F1F0 ATP synthase subunit C"/>
    <property type="match status" value="1"/>
</dbReference>
<dbReference type="HAMAP" id="MF_01396">
    <property type="entry name" value="ATP_synth_c_bact"/>
    <property type="match status" value="1"/>
</dbReference>
<dbReference type="InterPro" id="IPR005953">
    <property type="entry name" value="ATP_synth_csu_bac/chlpt"/>
</dbReference>
<dbReference type="InterPro" id="IPR000454">
    <property type="entry name" value="ATP_synth_F0_csu"/>
</dbReference>
<dbReference type="InterPro" id="IPR020537">
    <property type="entry name" value="ATP_synth_F0_csu_DDCD_BS"/>
</dbReference>
<dbReference type="InterPro" id="IPR038662">
    <property type="entry name" value="ATP_synth_F0_csu_sf"/>
</dbReference>
<dbReference type="InterPro" id="IPR002379">
    <property type="entry name" value="ATPase_proteolipid_c-like_dom"/>
</dbReference>
<dbReference type="InterPro" id="IPR035921">
    <property type="entry name" value="F/V-ATP_Csub_sf"/>
</dbReference>
<dbReference type="NCBIfam" id="TIGR01260">
    <property type="entry name" value="ATP_synt_c"/>
    <property type="match status" value="1"/>
</dbReference>
<dbReference type="NCBIfam" id="NF006295">
    <property type="entry name" value="PRK08482.1"/>
    <property type="match status" value="1"/>
</dbReference>
<dbReference type="Pfam" id="PF00137">
    <property type="entry name" value="ATP-synt_C"/>
    <property type="match status" value="1"/>
</dbReference>
<dbReference type="PRINTS" id="PR00124">
    <property type="entry name" value="ATPASEC"/>
</dbReference>
<dbReference type="SUPFAM" id="SSF81333">
    <property type="entry name" value="F1F0 ATP synthase subunit C"/>
    <property type="match status" value="1"/>
</dbReference>
<dbReference type="PROSITE" id="PS00605">
    <property type="entry name" value="ATPASE_C"/>
    <property type="match status" value="1"/>
</dbReference>
<accession>Q7VIL1</accession>
<gene>
    <name evidence="1" type="primary">atpE</name>
    <name type="ordered locus">HH_0593</name>
</gene>
<name>ATPL_HELHP</name>
<reference key="1">
    <citation type="journal article" date="2003" name="Proc. Natl. Acad. Sci. U.S.A.">
        <title>The complete genome sequence of the carcinogenic bacterium Helicobacter hepaticus.</title>
        <authorList>
            <person name="Suerbaum S."/>
            <person name="Josenhans C."/>
            <person name="Sterzenbach T."/>
            <person name="Drescher B."/>
            <person name="Brandt P."/>
            <person name="Bell M."/>
            <person name="Droege M."/>
            <person name="Fartmann B."/>
            <person name="Fischer H.-P."/>
            <person name="Ge Z."/>
            <person name="Hoerster A."/>
            <person name="Holland R."/>
            <person name="Klein K."/>
            <person name="Koenig J."/>
            <person name="Macko L."/>
            <person name="Mendz G.L."/>
            <person name="Nyakatura G."/>
            <person name="Schauer D.B."/>
            <person name="Shen Z."/>
            <person name="Weber J."/>
            <person name="Frosch M."/>
            <person name="Fox J.G."/>
        </authorList>
    </citation>
    <scope>NUCLEOTIDE SEQUENCE [LARGE SCALE GENOMIC DNA]</scope>
    <source>
        <strain>ATCC 51449 / 3B1</strain>
    </source>
</reference>
<sequence>MKFLALLCLGMVGFAFGAEVSGLDMIKSYSIAGAVIGLGIAALGGAIGMGHAAAATISGTARNPGISGKLLGTMFIALALIEAQVIYTLVLALIALYANPFLS</sequence>
<organism>
    <name type="scientific">Helicobacter hepaticus (strain ATCC 51449 / 3B1)</name>
    <dbReference type="NCBI Taxonomy" id="235279"/>
    <lineage>
        <taxon>Bacteria</taxon>
        <taxon>Pseudomonadati</taxon>
        <taxon>Campylobacterota</taxon>
        <taxon>Epsilonproteobacteria</taxon>
        <taxon>Campylobacterales</taxon>
        <taxon>Helicobacteraceae</taxon>
        <taxon>Helicobacter</taxon>
    </lineage>
</organism>
<proteinExistence type="inferred from homology"/>
<keyword id="KW-0066">ATP synthesis</keyword>
<keyword id="KW-0997">Cell inner membrane</keyword>
<keyword id="KW-1003">Cell membrane</keyword>
<keyword id="KW-0138">CF(0)</keyword>
<keyword id="KW-0375">Hydrogen ion transport</keyword>
<keyword id="KW-0406">Ion transport</keyword>
<keyword id="KW-0446">Lipid-binding</keyword>
<keyword id="KW-0472">Membrane</keyword>
<keyword id="KW-1185">Reference proteome</keyword>
<keyword id="KW-0812">Transmembrane</keyword>
<keyword id="KW-1133">Transmembrane helix</keyword>
<keyword id="KW-0813">Transport</keyword>
<evidence type="ECO:0000255" key="1">
    <source>
        <dbReference type="HAMAP-Rule" id="MF_01396"/>
    </source>
</evidence>